<dbReference type="EC" id="3.6.5.n1" evidence="1"/>
<dbReference type="EMBL" id="CP001176">
    <property type="protein sequence ID" value="ACK61702.1"/>
    <property type="molecule type" value="Genomic_DNA"/>
</dbReference>
<dbReference type="RefSeq" id="WP_001030949.1">
    <property type="nucleotide sequence ID" value="NZ_VEHB01000006.1"/>
</dbReference>
<dbReference type="SMR" id="B7HCU5"/>
<dbReference type="KEGG" id="bcb:BCB4264_A4438"/>
<dbReference type="HOGENOM" id="CLU_009995_3_3_9"/>
<dbReference type="Proteomes" id="UP000007096">
    <property type="component" value="Chromosome"/>
</dbReference>
<dbReference type="GO" id="GO:0005886">
    <property type="term" value="C:plasma membrane"/>
    <property type="evidence" value="ECO:0007669"/>
    <property type="project" value="UniProtKB-SubCell"/>
</dbReference>
<dbReference type="GO" id="GO:0005525">
    <property type="term" value="F:GTP binding"/>
    <property type="evidence" value="ECO:0007669"/>
    <property type="project" value="UniProtKB-UniRule"/>
</dbReference>
<dbReference type="GO" id="GO:0003924">
    <property type="term" value="F:GTPase activity"/>
    <property type="evidence" value="ECO:0007669"/>
    <property type="project" value="UniProtKB-UniRule"/>
</dbReference>
<dbReference type="GO" id="GO:0043022">
    <property type="term" value="F:ribosome binding"/>
    <property type="evidence" value="ECO:0007669"/>
    <property type="project" value="UniProtKB-UniRule"/>
</dbReference>
<dbReference type="GO" id="GO:0003746">
    <property type="term" value="F:translation elongation factor activity"/>
    <property type="evidence" value="ECO:0007669"/>
    <property type="project" value="UniProtKB-UniRule"/>
</dbReference>
<dbReference type="GO" id="GO:0045727">
    <property type="term" value="P:positive regulation of translation"/>
    <property type="evidence" value="ECO:0007669"/>
    <property type="project" value="UniProtKB-UniRule"/>
</dbReference>
<dbReference type="CDD" id="cd03699">
    <property type="entry name" value="EF4_II"/>
    <property type="match status" value="1"/>
</dbReference>
<dbReference type="CDD" id="cd16260">
    <property type="entry name" value="EF4_III"/>
    <property type="match status" value="1"/>
</dbReference>
<dbReference type="CDD" id="cd01890">
    <property type="entry name" value="LepA"/>
    <property type="match status" value="1"/>
</dbReference>
<dbReference type="CDD" id="cd03709">
    <property type="entry name" value="lepA_C"/>
    <property type="match status" value="1"/>
</dbReference>
<dbReference type="FunFam" id="3.40.50.300:FF:000078">
    <property type="entry name" value="Elongation factor 4"/>
    <property type="match status" value="1"/>
</dbReference>
<dbReference type="FunFam" id="2.40.30.10:FF:000015">
    <property type="entry name" value="Translation factor GUF1, mitochondrial"/>
    <property type="match status" value="1"/>
</dbReference>
<dbReference type="FunFam" id="3.30.70.240:FF:000007">
    <property type="entry name" value="Translation factor GUF1, mitochondrial"/>
    <property type="match status" value="1"/>
</dbReference>
<dbReference type="FunFam" id="3.30.70.2570:FF:000001">
    <property type="entry name" value="Translation factor GUF1, mitochondrial"/>
    <property type="match status" value="1"/>
</dbReference>
<dbReference type="FunFam" id="3.30.70.870:FF:000004">
    <property type="entry name" value="Translation factor GUF1, mitochondrial"/>
    <property type="match status" value="1"/>
</dbReference>
<dbReference type="Gene3D" id="3.30.70.240">
    <property type="match status" value="1"/>
</dbReference>
<dbReference type="Gene3D" id="3.30.70.2570">
    <property type="entry name" value="Elongation factor 4, C-terminal domain"/>
    <property type="match status" value="1"/>
</dbReference>
<dbReference type="Gene3D" id="3.30.70.870">
    <property type="entry name" value="Elongation Factor G (Translational Gtpase), domain 3"/>
    <property type="match status" value="1"/>
</dbReference>
<dbReference type="Gene3D" id="3.40.50.300">
    <property type="entry name" value="P-loop containing nucleotide triphosphate hydrolases"/>
    <property type="match status" value="1"/>
</dbReference>
<dbReference type="Gene3D" id="2.40.30.10">
    <property type="entry name" value="Translation factors"/>
    <property type="match status" value="1"/>
</dbReference>
<dbReference type="HAMAP" id="MF_00071">
    <property type="entry name" value="LepA"/>
    <property type="match status" value="1"/>
</dbReference>
<dbReference type="InterPro" id="IPR006297">
    <property type="entry name" value="EF-4"/>
</dbReference>
<dbReference type="InterPro" id="IPR035647">
    <property type="entry name" value="EFG_III/V"/>
</dbReference>
<dbReference type="InterPro" id="IPR000640">
    <property type="entry name" value="EFG_V-like"/>
</dbReference>
<dbReference type="InterPro" id="IPR004161">
    <property type="entry name" value="EFTu-like_2"/>
</dbReference>
<dbReference type="InterPro" id="IPR031157">
    <property type="entry name" value="G_TR_CS"/>
</dbReference>
<dbReference type="InterPro" id="IPR038363">
    <property type="entry name" value="LepA_C_sf"/>
</dbReference>
<dbReference type="InterPro" id="IPR013842">
    <property type="entry name" value="LepA_CTD"/>
</dbReference>
<dbReference type="InterPro" id="IPR035654">
    <property type="entry name" value="LepA_IV"/>
</dbReference>
<dbReference type="InterPro" id="IPR027417">
    <property type="entry name" value="P-loop_NTPase"/>
</dbReference>
<dbReference type="InterPro" id="IPR005225">
    <property type="entry name" value="Small_GTP-bd"/>
</dbReference>
<dbReference type="InterPro" id="IPR000795">
    <property type="entry name" value="T_Tr_GTP-bd_dom"/>
</dbReference>
<dbReference type="NCBIfam" id="TIGR01393">
    <property type="entry name" value="lepA"/>
    <property type="match status" value="1"/>
</dbReference>
<dbReference type="NCBIfam" id="TIGR00231">
    <property type="entry name" value="small_GTP"/>
    <property type="match status" value="1"/>
</dbReference>
<dbReference type="PANTHER" id="PTHR43512:SF4">
    <property type="entry name" value="TRANSLATION FACTOR GUF1 HOMOLOG, CHLOROPLASTIC"/>
    <property type="match status" value="1"/>
</dbReference>
<dbReference type="PANTHER" id="PTHR43512">
    <property type="entry name" value="TRANSLATION FACTOR GUF1-RELATED"/>
    <property type="match status" value="1"/>
</dbReference>
<dbReference type="Pfam" id="PF00679">
    <property type="entry name" value="EFG_C"/>
    <property type="match status" value="1"/>
</dbReference>
<dbReference type="Pfam" id="PF00009">
    <property type="entry name" value="GTP_EFTU"/>
    <property type="match status" value="1"/>
</dbReference>
<dbReference type="Pfam" id="PF03144">
    <property type="entry name" value="GTP_EFTU_D2"/>
    <property type="match status" value="1"/>
</dbReference>
<dbReference type="Pfam" id="PF06421">
    <property type="entry name" value="LepA_C"/>
    <property type="match status" value="1"/>
</dbReference>
<dbReference type="PRINTS" id="PR00315">
    <property type="entry name" value="ELONGATNFCT"/>
</dbReference>
<dbReference type="SMART" id="SM00838">
    <property type="entry name" value="EFG_C"/>
    <property type="match status" value="1"/>
</dbReference>
<dbReference type="SUPFAM" id="SSF54980">
    <property type="entry name" value="EF-G C-terminal domain-like"/>
    <property type="match status" value="2"/>
</dbReference>
<dbReference type="SUPFAM" id="SSF52540">
    <property type="entry name" value="P-loop containing nucleoside triphosphate hydrolases"/>
    <property type="match status" value="1"/>
</dbReference>
<dbReference type="PROSITE" id="PS00301">
    <property type="entry name" value="G_TR_1"/>
    <property type="match status" value="1"/>
</dbReference>
<dbReference type="PROSITE" id="PS51722">
    <property type="entry name" value="G_TR_2"/>
    <property type="match status" value="1"/>
</dbReference>
<comment type="function">
    <text evidence="1">Required for accurate and efficient protein synthesis under certain stress conditions. May act as a fidelity factor of the translation reaction, by catalyzing a one-codon backward translocation of tRNAs on improperly translocated ribosomes. Back-translocation proceeds from a post-translocation (POST) complex to a pre-translocation (PRE) complex, thus giving elongation factor G a second chance to translocate the tRNAs correctly. Binds to ribosomes in a GTP-dependent manner.</text>
</comment>
<comment type="catalytic activity">
    <reaction evidence="1">
        <text>GTP + H2O = GDP + phosphate + H(+)</text>
        <dbReference type="Rhea" id="RHEA:19669"/>
        <dbReference type="ChEBI" id="CHEBI:15377"/>
        <dbReference type="ChEBI" id="CHEBI:15378"/>
        <dbReference type="ChEBI" id="CHEBI:37565"/>
        <dbReference type="ChEBI" id="CHEBI:43474"/>
        <dbReference type="ChEBI" id="CHEBI:58189"/>
        <dbReference type="EC" id="3.6.5.n1"/>
    </reaction>
</comment>
<comment type="subcellular location">
    <subcellularLocation>
        <location evidence="1">Cell membrane</location>
        <topology evidence="1">Peripheral membrane protein</topology>
        <orientation evidence="1">Cytoplasmic side</orientation>
    </subcellularLocation>
</comment>
<comment type="similarity">
    <text evidence="1">Belongs to the TRAFAC class translation factor GTPase superfamily. Classic translation factor GTPase family. LepA subfamily.</text>
</comment>
<gene>
    <name evidence="1" type="primary">lepA</name>
    <name type="ordered locus">BCB4264_A4438</name>
</gene>
<evidence type="ECO:0000255" key="1">
    <source>
        <dbReference type="HAMAP-Rule" id="MF_00071"/>
    </source>
</evidence>
<feature type="chain" id="PRO_1000117016" description="Elongation factor 4">
    <location>
        <begin position="1"/>
        <end position="607"/>
    </location>
</feature>
<feature type="domain" description="tr-type G">
    <location>
        <begin position="11"/>
        <end position="193"/>
    </location>
</feature>
<feature type="binding site" evidence="1">
    <location>
        <begin position="23"/>
        <end position="28"/>
    </location>
    <ligand>
        <name>GTP</name>
        <dbReference type="ChEBI" id="CHEBI:37565"/>
    </ligand>
</feature>
<feature type="binding site" evidence="1">
    <location>
        <begin position="140"/>
        <end position="143"/>
    </location>
    <ligand>
        <name>GTP</name>
        <dbReference type="ChEBI" id="CHEBI:37565"/>
    </ligand>
</feature>
<reference key="1">
    <citation type="submission" date="2008-10" db="EMBL/GenBank/DDBJ databases">
        <title>Genome sequence of Bacillus cereus B4264.</title>
        <authorList>
            <person name="Dodson R.J."/>
            <person name="Durkin A.S."/>
            <person name="Rosovitz M.J."/>
            <person name="Rasko D.A."/>
            <person name="Hoffmaster A."/>
            <person name="Ravel J."/>
            <person name="Sutton G."/>
        </authorList>
    </citation>
    <scope>NUCLEOTIDE SEQUENCE [LARGE SCALE GENOMIC DNA]</scope>
    <source>
        <strain>B4264</strain>
    </source>
</reference>
<proteinExistence type="inferred from homology"/>
<accession>B7HCU5</accession>
<protein>
    <recommendedName>
        <fullName evidence="1">Elongation factor 4</fullName>
        <shortName evidence="1">EF-4</shortName>
        <ecNumber evidence="1">3.6.5.n1</ecNumber>
    </recommendedName>
    <alternativeName>
        <fullName evidence="1">Ribosomal back-translocase LepA</fullName>
    </alternativeName>
</protein>
<name>LEPA_BACC4</name>
<organism>
    <name type="scientific">Bacillus cereus (strain B4264)</name>
    <dbReference type="NCBI Taxonomy" id="405532"/>
    <lineage>
        <taxon>Bacteria</taxon>
        <taxon>Bacillati</taxon>
        <taxon>Bacillota</taxon>
        <taxon>Bacilli</taxon>
        <taxon>Bacillales</taxon>
        <taxon>Bacillaceae</taxon>
        <taxon>Bacillus</taxon>
        <taxon>Bacillus cereus group</taxon>
    </lineage>
</organism>
<keyword id="KW-1003">Cell membrane</keyword>
<keyword id="KW-0342">GTP-binding</keyword>
<keyword id="KW-0378">Hydrolase</keyword>
<keyword id="KW-0472">Membrane</keyword>
<keyword id="KW-0547">Nucleotide-binding</keyword>
<keyword id="KW-0648">Protein biosynthesis</keyword>
<sequence>MNKEERAKRQSKIRNFSIIAHIDHGKSTLADRILEKTNALTQREMKAQLLDSMDLERERGITIKLNAVQLNYKAKDGEEYILHLIDTPGHVDFTYEVSRSLAACEGAILVVDAAQGIEAQTLANVYLALDNNLEILPVINKIDLPSADPERVRQEVEDVIGLDASEAVLASAKAGIGIEEILEQIVEKVPAPAGDSEEPLQCMIFDSLYDPYRGVIAYIRVVNGTVKVGDKVRMMATGKEFEVTEVGVFTPKTTQRDELTVGDVGFLAASIKNVGDTRVGDTITHAKRPAAEPLAGYRKLNPMVFCGLYPIDSARYNDLRDALEKLELNDSALEFEPETSQALGFGFRCGFLGLLHMEIIQERIEREFKIDLITTAPSVIYKVYLTNGEDVIVDNPSNMPDPQSIDRVEEPFVKASIMVPNDYVGAVMEICQGKRGTFIDMQYLDETRVTLTYEIPLSEIVYDFFDQLKSNTKGYASFDYELIGYKPSKLVKMDILLNNEQVDALSFIVHRDSAYDRGKVIVEKLKELIPRQQFEVPIQATIGNKVVARSTIKAMRKNVLAKCYGGDISRKRKLLDKQKEGKKRMKSVGSVEVPQEAFMAVLKMDDN</sequence>